<keyword id="KW-0378">Hydrolase</keyword>
<keyword id="KW-0479">Metal-binding</keyword>
<keyword id="KW-0862">Zinc</keyword>
<protein>
    <recommendedName>
        <fullName evidence="1">Probable phosphatase YPDSF_1086</fullName>
        <ecNumber evidence="1">3.1.3.-</ecNumber>
    </recommendedName>
</protein>
<reference key="1">
    <citation type="submission" date="2007-02" db="EMBL/GenBank/DDBJ databases">
        <title>Complete sequence of chromosome of Yersinia pestis Pestoides F.</title>
        <authorList>
            <consortium name="US DOE Joint Genome Institute"/>
            <person name="Copeland A."/>
            <person name="Lucas S."/>
            <person name="Lapidus A."/>
            <person name="Barry K."/>
            <person name="Detter J.C."/>
            <person name="Glavina del Rio T."/>
            <person name="Hammon N."/>
            <person name="Israni S."/>
            <person name="Dalin E."/>
            <person name="Tice H."/>
            <person name="Pitluck S."/>
            <person name="Di Bartolo G."/>
            <person name="Chain P."/>
            <person name="Malfatti S."/>
            <person name="Shin M."/>
            <person name="Vergez L."/>
            <person name="Schmutz J."/>
            <person name="Larimer F."/>
            <person name="Land M."/>
            <person name="Hauser L."/>
            <person name="Worsham P."/>
            <person name="Chu M."/>
            <person name="Bearden S."/>
            <person name="Garcia E."/>
            <person name="Richardson P."/>
        </authorList>
    </citation>
    <scope>NUCLEOTIDE SEQUENCE [LARGE SCALE GENOMIC DNA]</scope>
    <source>
        <strain>Pestoides F</strain>
    </source>
</reference>
<gene>
    <name type="ordered locus">YPDSF_1086</name>
</gene>
<sequence length="245" mass="26930">MYPVDLHMHTVASTHAYSTLHDYIAEAKLKNIKLFAITDHGPDMADAPHYWHFMNMRVWPRLVDGVGILRGIEANIKNLDGDIDCTGPMLDAVDLLIAGFHEPVFPPQDKAANTQAMIATMAQGNVHIISHPGNPKYPVDIPAIAQAAAKYNVALELNNSSFAHSRKGSEANCRAIAAAVRDAGGWLALGSDSHIAYALGIFEHCERIIAEVNFPQERILNVSPRRLLDYLEQRGRPAIPELAEL</sequence>
<feature type="chain" id="PRO_1000069039" description="Probable phosphatase YPDSF_1086">
    <location>
        <begin position="1"/>
        <end position="245"/>
    </location>
</feature>
<feature type="binding site" evidence="1">
    <location>
        <position position="7"/>
    </location>
    <ligand>
        <name>Zn(2+)</name>
        <dbReference type="ChEBI" id="CHEBI:29105"/>
        <label>1</label>
    </ligand>
</feature>
<feature type="binding site" evidence="1">
    <location>
        <position position="9"/>
    </location>
    <ligand>
        <name>Zn(2+)</name>
        <dbReference type="ChEBI" id="CHEBI:29105"/>
        <label>1</label>
    </ligand>
</feature>
<feature type="binding site" evidence="1">
    <location>
        <position position="15"/>
    </location>
    <ligand>
        <name>Zn(2+)</name>
        <dbReference type="ChEBI" id="CHEBI:29105"/>
        <label>2</label>
    </ligand>
</feature>
<feature type="binding site" evidence="1">
    <location>
        <position position="40"/>
    </location>
    <ligand>
        <name>Zn(2+)</name>
        <dbReference type="ChEBI" id="CHEBI:29105"/>
        <label>2</label>
    </ligand>
</feature>
<feature type="binding site" evidence="1">
    <location>
        <position position="73"/>
    </location>
    <ligand>
        <name>Zn(2+)</name>
        <dbReference type="ChEBI" id="CHEBI:29105"/>
        <label>1</label>
    </ligand>
</feature>
<feature type="binding site" evidence="1">
    <location>
        <position position="73"/>
    </location>
    <ligand>
        <name>Zn(2+)</name>
        <dbReference type="ChEBI" id="CHEBI:29105"/>
        <label>3</label>
    </ligand>
</feature>
<feature type="binding site" evidence="1">
    <location>
        <position position="101"/>
    </location>
    <ligand>
        <name>Zn(2+)</name>
        <dbReference type="ChEBI" id="CHEBI:29105"/>
        <label>3</label>
    </ligand>
</feature>
<feature type="binding site" evidence="1">
    <location>
        <position position="131"/>
    </location>
    <ligand>
        <name>Zn(2+)</name>
        <dbReference type="ChEBI" id="CHEBI:29105"/>
        <label>3</label>
    </ligand>
</feature>
<feature type="binding site" evidence="1">
    <location>
        <position position="192"/>
    </location>
    <ligand>
        <name>Zn(2+)</name>
        <dbReference type="ChEBI" id="CHEBI:29105"/>
        <label>1</label>
    </ligand>
</feature>
<feature type="binding site" evidence="1">
    <location>
        <position position="194"/>
    </location>
    <ligand>
        <name>Zn(2+)</name>
        <dbReference type="ChEBI" id="CHEBI:29105"/>
        <label>2</label>
    </ligand>
</feature>
<evidence type="ECO:0000255" key="1">
    <source>
        <dbReference type="HAMAP-Rule" id="MF_01561"/>
    </source>
</evidence>
<comment type="cofactor">
    <cofactor evidence="1">
        <name>Zn(2+)</name>
        <dbReference type="ChEBI" id="CHEBI:29105"/>
    </cofactor>
    <text evidence="1">Binds 3 Zn(2+) ions per subunit.</text>
</comment>
<comment type="subunit">
    <text evidence="1">Homotrimer.</text>
</comment>
<comment type="similarity">
    <text evidence="1">Belongs to the PHP family.</text>
</comment>
<dbReference type="EC" id="3.1.3.-" evidence="1"/>
<dbReference type="EMBL" id="CP000668">
    <property type="protein sequence ID" value="ABP39484.1"/>
    <property type="molecule type" value="Genomic_DNA"/>
</dbReference>
<dbReference type="RefSeq" id="WP_002211221.1">
    <property type="nucleotide sequence ID" value="NZ_CP009715.1"/>
</dbReference>
<dbReference type="SMR" id="A4TJM2"/>
<dbReference type="KEGG" id="ypp:YPDSF_1086"/>
<dbReference type="PATRIC" id="fig|386656.14.peg.2747"/>
<dbReference type="GO" id="GO:0005829">
    <property type="term" value="C:cytosol"/>
    <property type="evidence" value="ECO:0007669"/>
    <property type="project" value="TreeGrafter"/>
</dbReference>
<dbReference type="GO" id="GO:0016791">
    <property type="term" value="F:phosphatase activity"/>
    <property type="evidence" value="ECO:0007669"/>
    <property type="project" value="UniProtKB-UniRule"/>
</dbReference>
<dbReference type="GO" id="GO:0008270">
    <property type="term" value="F:zinc ion binding"/>
    <property type="evidence" value="ECO:0007669"/>
    <property type="project" value="UniProtKB-UniRule"/>
</dbReference>
<dbReference type="GO" id="GO:0071978">
    <property type="term" value="P:bacterial-type flagellum-dependent swarming motility"/>
    <property type="evidence" value="ECO:0007669"/>
    <property type="project" value="TreeGrafter"/>
</dbReference>
<dbReference type="CDD" id="cd07437">
    <property type="entry name" value="PHP_HisPPase_Ycdx_like"/>
    <property type="match status" value="1"/>
</dbReference>
<dbReference type="FunFam" id="3.20.20.140:FF:000008">
    <property type="entry name" value="Probable phosphatase YcdX"/>
    <property type="match status" value="1"/>
</dbReference>
<dbReference type="Gene3D" id="3.20.20.140">
    <property type="entry name" value="Metal-dependent hydrolases"/>
    <property type="match status" value="1"/>
</dbReference>
<dbReference type="HAMAP" id="MF_01561">
    <property type="entry name" value="YcdX_phosphat"/>
    <property type="match status" value="1"/>
</dbReference>
<dbReference type="InterPro" id="IPR023710">
    <property type="entry name" value="Phosphatase_YcdX_put"/>
</dbReference>
<dbReference type="InterPro" id="IPR004013">
    <property type="entry name" value="PHP_dom"/>
</dbReference>
<dbReference type="InterPro" id="IPR050243">
    <property type="entry name" value="PHP_phosphatase"/>
</dbReference>
<dbReference type="InterPro" id="IPR003141">
    <property type="entry name" value="Pol/His_phosphatase_N"/>
</dbReference>
<dbReference type="InterPro" id="IPR016195">
    <property type="entry name" value="Pol/histidinol_Pase-like"/>
</dbReference>
<dbReference type="NCBIfam" id="NF006702">
    <property type="entry name" value="PRK09248.1"/>
    <property type="match status" value="1"/>
</dbReference>
<dbReference type="PANTHER" id="PTHR36928">
    <property type="entry name" value="PHOSPHATASE YCDX-RELATED"/>
    <property type="match status" value="1"/>
</dbReference>
<dbReference type="PANTHER" id="PTHR36928:SF1">
    <property type="entry name" value="PHOSPHATASE YCDX-RELATED"/>
    <property type="match status" value="1"/>
</dbReference>
<dbReference type="Pfam" id="PF02811">
    <property type="entry name" value="PHP"/>
    <property type="match status" value="1"/>
</dbReference>
<dbReference type="SMART" id="SM00481">
    <property type="entry name" value="POLIIIAc"/>
    <property type="match status" value="1"/>
</dbReference>
<dbReference type="SUPFAM" id="SSF89550">
    <property type="entry name" value="PHP domain-like"/>
    <property type="match status" value="1"/>
</dbReference>
<organism>
    <name type="scientific">Yersinia pestis (strain Pestoides F)</name>
    <dbReference type="NCBI Taxonomy" id="386656"/>
    <lineage>
        <taxon>Bacteria</taxon>
        <taxon>Pseudomonadati</taxon>
        <taxon>Pseudomonadota</taxon>
        <taxon>Gammaproteobacteria</taxon>
        <taxon>Enterobacterales</taxon>
        <taxon>Yersiniaceae</taxon>
        <taxon>Yersinia</taxon>
    </lineage>
</organism>
<proteinExistence type="inferred from homology"/>
<accession>A4TJM2</accession>
<name>Y1086_YERPP</name>